<keyword id="KW-0002">3D-structure</keyword>
<keyword id="KW-0963">Cytoplasm</keyword>
<keyword id="KW-0489">Methyltransferase</keyword>
<keyword id="KW-0539">Nucleus</keyword>
<keyword id="KW-1185">Reference proteome</keyword>
<keyword id="KW-0949">S-adenosyl-L-methionine</keyword>
<keyword id="KW-0749">Sporulation</keyword>
<keyword id="KW-0808">Transferase</keyword>
<dbReference type="EC" id="2.1.1.-" evidence="3"/>
<dbReference type="EMBL" id="CU329672">
    <property type="protein sequence ID" value="CAB40784.1"/>
    <property type="molecule type" value="Genomic_DNA"/>
</dbReference>
<dbReference type="PIR" id="T41271">
    <property type="entry name" value="T41271"/>
</dbReference>
<dbReference type="RefSeq" id="NP_588361.1">
    <property type="nucleotide sequence ID" value="NM_001023352.2"/>
</dbReference>
<dbReference type="PDB" id="5H6Z">
    <property type="method" value="X-ray"/>
    <property type="resolution" value="2.00 A"/>
    <property type="chains" value="A/B=1-147"/>
</dbReference>
<dbReference type="PDB" id="5WW0">
    <property type="method" value="X-ray"/>
    <property type="resolution" value="2.10 A"/>
    <property type="chains" value="A/B=1-147"/>
</dbReference>
<dbReference type="PDBsum" id="5H6Z"/>
<dbReference type="PDBsum" id="5WW0"/>
<dbReference type="SMR" id="Q9Y7Q6"/>
<dbReference type="BioGRID" id="275699">
    <property type="interactions" value="2"/>
</dbReference>
<dbReference type="STRING" id="284812.Q9Y7Q6"/>
<dbReference type="iPTMnet" id="Q9Y7Q6"/>
<dbReference type="PaxDb" id="4896-SPCC297.04c.1"/>
<dbReference type="EnsemblFungi" id="SPCC297.04c.1">
    <property type="protein sequence ID" value="SPCC297.04c.1:pep"/>
    <property type="gene ID" value="SPCC297.04c"/>
</dbReference>
<dbReference type="GeneID" id="2539127"/>
<dbReference type="KEGG" id="spo:2539127"/>
<dbReference type="PomBase" id="SPCC297.04c">
    <property type="gene designation" value="set7"/>
</dbReference>
<dbReference type="VEuPathDB" id="FungiDB:SPCC297.04c"/>
<dbReference type="eggNOG" id="ENOG502S3RW">
    <property type="taxonomic scope" value="Eukaryota"/>
</dbReference>
<dbReference type="HOGENOM" id="CLU_124044_0_0_1"/>
<dbReference type="InParanoid" id="Q9Y7Q6"/>
<dbReference type="OMA" id="ATYEINF"/>
<dbReference type="PhylomeDB" id="Q9Y7Q6"/>
<dbReference type="PRO" id="PR:Q9Y7Q6"/>
<dbReference type="Proteomes" id="UP000002485">
    <property type="component" value="Chromosome III"/>
</dbReference>
<dbReference type="GO" id="GO:0000785">
    <property type="term" value="C:chromatin"/>
    <property type="evidence" value="ECO:0000305"/>
    <property type="project" value="PomBase"/>
</dbReference>
<dbReference type="GO" id="GO:0005737">
    <property type="term" value="C:cytoplasm"/>
    <property type="evidence" value="ECO:0000314"/>
    <property type="project" value="PomBase"/>
</dbReference>
<dbReference type="GO" id="GO:0005829">
    <property type="term" value="C:cytosol"/>
    <property type="evidence" value="ECO:0007005"/>
    <property type="project" value="PomBase"/>
</dbReference>
<dbReference type="GO" id="GO:0005634">
    <property type="term" value="C:nucleus"/>
    <property type="evidence" value="ECO:0000314"/>
    <property type="project" value="PomBase"/>
</dbReference>
<dbReference type="GO" id="GO:0062122">
    <property type="term" value="F:histone H3K37 methyltransferase activity"/>
    <property type="evidence" value="ECO:0000314"/>
    <property type="project" value="PomBase"/>
</dbReference>
<dbReference type="GO" id="GO:0006325">
    <property type="term" value="P:chromatin organization"/>
    <property type="evidence" value="ECO:0000269"/>
    <property type="project" value="PomBase"/>
</dbReference>
<dbReference type="GO" id="GO:0032259">
    <property type="term" value="P:methylation"/>
    <property type="evidence" value="ECO:0007669"/>
    <property type="project" value="UniProtKB-KW"/>
</dbReference>
<dbReference type="GO" id="GO:0030435">
    <property type="term" value="P:sporulation resulting in formation of a cellular spore"/>
    <property type="evidence" value="ECO:0007669"/>
    <property type="project" value="UniProtKB-KW"/>
</dbReference>
<dbReference type="CDD" id="cd10540">
    <property type="entry name" value="SET_SpSet7-like"/>
    <property type="match status" value="1"/>
</dbReference>
<dbReference type="FunFam" id="2.170.270.10:FF:000050">
    <property type="entry name" value="Chromosome 1, whole genome shotgun sequence"/>
    <property type="match status" value="1"/>
</dbReference>
<dbReference type="Gene3D" id="2.170.270.10">
    <property type="entry name" value="SET domain"/>
    <property type="match status" value="1"/>
</dbReference>
<dbReference type="InterPro" id="IPR009207">
    <property type="entry name" value="SET7_MeTrfase"/>
</dbReference>
<dbReference type="InterPro" id="IPR001214">
    <property type="entry name" value="SET_dom"/>
</dbReference>
<dbReference type="InterPro" id="IPR046341">
    <property type="entry name" value="SET_dom_sf"/>
</dbReference>
<dbReference type="Pfam" id="PF00856">
    <property type="entry name" value="SET"/>
    <property type="match status" value="1"/>
</dbReference>
<dbReference type="PIRSF" id="PIRSF022536">
    <property type="entry name" value="A612L_SET"/>
    <property type="match status" value="1"/>
</dbReference>
<dbReference type="SMART" id="SM00317">
    <property type="entry name" value="SET"/>
    <property type="match status" value="1"/>
</dbReference>
<dbReference type="SUPFAM" id="SSF82199">
    <property type="entry name" value="SET domain"/>
    <property type="match status" value="1"/>
</dbReference>
<dbReference type="PROSITE" id="PS50280">
    <property type="entry name" value="SET"/>
    <property type="match status" value="1"/>
</dbReference>
<organism>
    <name type="scientific">Schizosaccharomyces pombe (strain 972 / ATCC 24843)</name>
    <name type="common">Fission yeast</name>
    <dbReference type="NCBI Taxonomy" id="284812"/>
    <lineage>
        <taxon>Eukaryota</taxon>
        <taxon>Fungi</taxon>
        <taxon>Dikarya</taxon>
        <taxon>Ascomycota</taxon>
        <taxon>Taphrinomycotina</taxon>
        <taxon>Schizosaccharomycetes</taxon>
        <taxon>Schizosaccharomycetales</taxon>
        <taxon>Schizosaccharomycetaceae</taxon>
        <taxon>Schizosaccharomyces</taxon>
    </lineage>
</organism>
<protein>
    <recommendedName>
        <fullName>Histone-lysine N-methyltransferase, H3 lysine-37 specific</fullName>
        <ecNumber evidence="3">2.1.1.-</ecNumber>
    </recommendedName>
</protein>
<accession>Q9Y7Q6</accession>
<reference key="1">
    <citation type="journal article" date="2002" name="Nature">
        <title>The genome sequence of Schizosaccharomyces pombe.</title>
        <authorList>
            <person name="Wood V."/>
            <person name="Gwilliam R."/>
            <person name="Rajandream M.A."/>
            <person name="Lyne M.H."/>
            <person name="Lyne R."/>
            <person name="Stewart A."/>
            <person name="Sgouros J.G."/>
            <person name="Peat N."/>
            <person name="Hayles J."/>
            <person name="Baker S.G."/>
            <person name="Basham D."/>
            <person name="Bowman S."/>
            <person name="Brooks K."/>
            <person name="Brown D."/>
            <person name="Brown S."/>
            <person name="Chillingworth T."/>
            <person name="Churcher C.M."/>
            <person name="Collins M."/>
            <person name="Connor R."/>
            <person name="Cronin A."/>
            <person name="Davis P."/>
            <person name="Feltwell T."/>
            <person name="Fraser A."/>
            <person name="Gentles S."/>
            <person name="Goble A."/>
            <person name="Hamlin N."/>
            <person name="Harris D.E."/>
            <person name="Hidalgo J."/>
            <person name="Hodgson G."/>
            <person name="Holroyd S."/>
            <person name="Hornsby T."/>
            <person name="Howarth S."/>
            <person name="Huckle E.J."/>
            <person name="Hunt S."/>
            <person name="Jagels K."/>
            <person name="James K.D."/>
            <person name="Jones L."/>
            <person name="Jones M."/>
            <person name="Leather S."/>
            <person name="McDonald S."/>
            <person name="McLean J."/>
            <person name="Mooney P."/>
            <person name="Moule S."/>
            <person name="Mungall K.L."/>
            <person name="Murphy L.D."/>
            <person name="Niblett D."/>
            <person name="Odell C."/>
            <person name="Oliver K."/>
            <person name="O'Neil S."/>
            <person name="Pearson D."/>
            <person name="Quail M.A."/>
            <person name="Rabbinowitsch E."/>
            <person name="Rutherford K.M."/>
            <person name="Rutter S."/>
            <person name="Saunders D."/>
            <person name="Seeger K."/>
            <person name="Sharp S."/>
            <person name="Skelton J."/>
            <person name="Simmonds M.N."/>
            <person name="Squares R."/>
            <person name="Squares S."/>
            <person name="Stevens K."/>
            <person name="Taylor K."/>
            <person name="Taylor R.G."/>
            <person name="Tivey A."/>
            <person name="Walsh S.V."/>
            <person name="Warren T."/>
            <person name="Whitehead S."/>
            <person name="Woodward J.R."/>
            <person name="Volckaert G."/>
            <person name="Aert R."/>
            <person name="Robben J."/>
            <person name="Grymonprez B."/>
            <person name="Weltjens I."/>
            <person name="Vanstreels E."/>
            <person name="Rieger M."/>
            <person name="Schaefer M."/>
            <person name="Mueller-Auer S."/>
            <person name="Gabel C."/>
            <person name="Fuchs M."/>
            <person name="Duesterhoeft A."/>
            <person name="Fritzc C."/>
            <person name="Holzer E."/>
            <person name="Moestl D."/>
            <person name="Hilbert H."/>
            <person name="Borzym K."/>
            <person name="Langer I."/>
            <person name="Beck A."/>
            <person name="Lehrach H."/>
            <person name="Reinhardt R."/>
            <person name="Pohl T.M."/>
            <person name="Eger P."/>
            <person name="Zimmermann W."/>
            <person name="Wedler H."/>
            <person name="Wambutt R."/>
            <person name="Purnelle B."/>
            <person name="Goffeau A."/>
            <person name="Cadieu E."/>
            <person name="Dreano S."/>
            <person name="Gloux S."/>
            <person name="Lelaure V."/>
            <person name="Mottier S."/>
            <person name="Galibert F."/>
            <person name="Aves S.J."/>
            <person name="Xiang Z."/>
            <person name="Hunt C."/>
            <person name="Moore K."/>
            <person name="Hurst S.M."/>
            <person name="Lucas M."/>
            <person name="Rochet M."/>
            <person name="Gaillardin C."/>
            <person name="Tallada V.A."/>
            <person name="Garzon A."/>
            <person name="Thode G."/>
            <person name="Daga R.R."/>
            <person name="Cruzado L."/>
            <person name="Jimenez J."/>
            <person name="Sanchez M."/>
            <person name="del Rey F."/>
            <person name="Benito J."/>
            <person name="Dominguez A."/>
            <person name="Revuelta J.L."/>
            <person name="Moreno S."/>
            <person name="Armstrong J."/>
            <person name="Forsburg S.L."/>
            <person name="Cerutti L."/>
            <person name="Lowe T."/>
            <person name="McCombie W.R."/>
            <person name="Paulsen I."/>
            <person name="Potashkin J."/>
            <person name="Shpakovski G.V."/>
            <person name="Ussery D."/>
            <person name="Barrell B.G."/>
            <person name="Nurse P."/>
        </authorList>
    </citation>
    <scope>NUCLEOTIDE SEQUENCE [LARGE SCALE GENOMIC DNA]</scope>
    <source>
        <strain>972 / ATCC 24843</strain>
    </source>
</reference>
<reference key="2">
    <citation type="journal article" date="2006" name="Nat. Biotechnol.">
        <title>ORFeome cloning and global analysis of protein localization in the fission yeast Schizosaccharomyces pombe.</title>
        <authorList>
            <person name="Matsuyama A."/>
            <person name="Arai R."/>
            <person name="Yashiroda Y."/>
            <person name="Shirai A."/>
            <person name="Kamata A."/>
            <person name="Sekido S."/>
            <person name="Kobayashi Y."/>
            <person name="Hashimoto A."/>
            <person name="Hamamoto M."/>
            <person name="Hiraoka Y."/>
            <person name="Horinouchi S."/>
            <person name="Yoshida M."/>
        </authorList>
    </citation>
    <scope>SUBCELLULAR LOCATION [LARGE SCALE ANALYSIS]</scope>
</reference>
<reference key="3">
    <citation type="journal article" date="2019" name="Structure">
        <title>Set7 Is a H3K37 Methyltransferase in Schizosaccharomyces pombe and Is Required for Proper Gametogenesis.</title>
        <authorList>
            <person name="Shen Y."/>
            <person name="Mevius D.E.H.F."/>
            <person name="Caliandro R."/>
            <person name="Carrozzini B."/>
            <person name="Roh Y."/>
            <person name="Kim J."/>
            <person name="Kim S."/>
            <person name="Ha S.C."/>
            <person name="Morishita M."/>
            <person name="di Luccio E."/>
        </authorList>
    </citation>
    <scope>X-RAY CRYSTALLOGRAPHY (2.0 ANGSTROMS)</scope>
    <scope>FUNCTION</scope>
    <scope>CATALYTIC ACTIVITY</scope>
    <scope>SUBUNIT</scope>
    <scope>SUBCELLULAR LOCATION</scope>
    <scope>DISRUPTION PHENOTYPE</scope>
    <scope>MUTAGENESIS OF ARG-20; TYR-59; TYR-61; ASN-79; HIS-80; TRP-88 AND TYR-115</scope>
</reference>
<proteinExistence type="evidence at protein level"/>
<evidence type="ECO:0000255" key="1">
    <source>
        <dbReference type="PROSITE-ProRule" id="PRU00190"/>
    </source>
</evidence>
<evidence type="ECO:0000269" key="2">
    <source>
    </source>
</evidence>
<evidence type="ECO:0000269" key="3">
    <source>
    </source>
</evidence>
<evidence type="ECO:0000312" key="4">
    <source>
        <dbReference type="PomBase" id="SPCC297.04c"/>
    </source>
</evidence>
<evidence type="ECO:0007829" key="5">
    <source>
        <dbReference type="PDB" id="5H6Z"/>
    </source>
</evidence>
<evidence type="ECO:0007829" key="6">
    <source>
        <dbReference type="PDB" id="5WW0"/>
    </source>
</evidence>
<gene>
    <name evidence="4" type="primary">set7</name>
    <name evidence="4" type="ORF">SPCC297.04c</name>
</gene>
<comment type="function">
    <text evidence="3">Histone lysine methyltransferase that specifically mono-, di-, and trimethylates 'Lys-37' of histone H3 to regulate sporulation.</text>
</comment>
<comment type="catalytic activity">
    <reaction evidence="3">
        <text>L-lysyl(37)-[histone H3] + S-adenosyl-L-methionine = N(6)-methyl-L-lysyl(37)-[histone H3] + S-adenosyl-L-homocysteine + H(+)</text>
        <dbReference type="Rhea" id="RHEA:67112"/>
        <dbReference type="Rhea" id="RHEA-COMP:17189"/>
        <dbReference type="Rhea" id="RHEA-COMP:17190"/>
        <dbReference type="ChEBI" id="CHEBI:15378"/>
        <dbReference type="ChEBI" id="CHEBI:29969"/>
        <dbReference type="ChEBI" id="CHEBI:57856"/>
        <dbReference type="ChEBI" id="CHEBI:59789"/>
        <dbReference type="ChEBI" id="CHEBI:61929"/>
    </reaction>
    <physiologicalReaction direction="left-to-right" evidence="3">
        <dbReference type="Rhea" id="RHEA:67113"/>
    </physiologicalReaction>
</comment>
<comment type="catalytic activity">
    <reaction evidence="3">
        <text>N(6)-methyl-L-lysyl(37)-[histone H3] + S-adenosyl-L-methionine = N(6),N(6)-dimethyl-L-lysyl(37)-[histone H3] + S-adenosyl-L-homocysteine + H(+)</text>
        <dbReference type="Rhea" id="RHEA:67116"/>
        <dbReference type="Rhea" id="RHEA-COMP:17190"/>
        <dbReference type="Rhea" id="RHEA-COMP:17191"/>
        <dbReference type="ChEBI" id="CHEBI:15378"/>
        <dbReference type="ChEBI" id="CHEBI:57856"/>
        <dbReference type="ChEBI" id="CHEBI:59789"/>
        <dbReference type="ChEBI" id="CHEBI:61929"/>
        <dbReference type="ChEBI" id="CHEBI:61976"/>
    </reaction>
    <physiologicalReaction direction="left-to-right" evidence="3">
        <dbReference type="Rhea" id="RHEA:67117"/>
    </physiologicalReaction>
</comment>
<comment type="catalytic activity">
    <reaction evidence="3">
        <text>N(6),N(6)-dimethyl-L-lysyl(37)-[histone H3] + S-adenosyl-L-methionine = N(6),N(6),N(6)-trimethyl-L-lysyl(37)-[histone H3] + S-adenosyl-L-homocysteine + H(+)</text>
        <dbReference type="Rhea" id="RHEA:67120"/>
        <dbReference type="Rhea" id="RHEA-COMP:17191"/>
        <dbReference type="Rhea" id="RHEA-COMP:17192"/>
        <dbReference type="ChEBI" id="CHEBI:15378"/>
        <dbReference type="ChEBI" id="CHEBI:57856"/>
        <dbReference type="ChEBI" id="CHEBI:59789"/>
        <dbReference type="ChEBI" id="CHEBI:61961"/>
        <dbReference type="ChEBI" id="CHEBI:61976"/>
    </reaction>
    <physiologicalReaction direction="left-to-right" evidence="3">
        <dbReference type="Rhea" id="RHEA:67121"/>
    </physiologicalReaction>
</comment>
<comment type="subunit">
    <text evidence="3">Homodimer.</text>
</comment>
<comment type="subcellular location">
    <subcellularLocation>
        <location evidence="2 3">Cytoplasm</location>
    </subcellularLocation>
    <subcellularLocation>
        <location evidence="3">Nucleus</location>
    </subcellularLocation>
</comment>
<comment type="disruption phenotype">
    <text evidence="3">Abnormal sporulation resulting in asci with fewer than four spores and with abnormal spore wall morphology.</text>
</comment>
<comment type="similarity">
    <text evidence="1">Belongs to the class V-like SAM-binding methyltransferase superfamily.</text>
</comment>
<name>SET7_SCHPO</name>
<sequence length="147" mass="17209">MRIPVIRSPLEIRDTERKGRGVFALEPIPAQTCIEISPVLMFSKEEYEQHGQYTVLNEYTYVWSEGKQGLALGLGSMFNHDRHPNVYWKKDNRNNYISYYTLREIKTNEELCISYGDHLWFEDEASSASRISPNEENEDFPLQNISL</sequence>
<feature type="chain" id="PRO_0000317701" description="Histone-lysine N-methyltransferase, H3 lysine-37 specific">
    <location>
        <begin position="1"/>
        <end position="147"/>
    </location>
</feature>
<feature type="domain" description="SET" evidence="1">
    <location>
        <begin position="8"/>
        <end position="116"/>
    </location>
</feature>
<feature type="mutagenesis site" description="Decreases activity." evidence="3">
    <original>R</original>
    <variation>A</variation>
    <location>
        <position position="20"/>
    </location>
</feature>
<feature type="mutagenesis site" description="Abolishes activity." evidence="3">
    <original>Y</original>
    <variation>A</variation>
    <location>
        <position position="59"/>
    </location>
</feature>
<feature type="mutagenesis site" description="Severely decreases activity." evidence="3">
    <original>Y</original>
    <variation>A</variation>
    <location>
        <position position="61"/>
    </location>
</feature>
<feature type="mutagenesis site" description="Abolishes activity." evidence="3">
    <original>N</original>
    <variation>A</variation>
    <location>
        <position position="79"/>
    </location>
</feature>
<feature type="mutagenesis site" description="Abolishes activity." evidence="3">
    <original>H</original>
    <variation>A</variation>
    <location>
        <position position="80"/>
    </location>
</feature>
<feature type="mutagenesis site" description="Abolishes activity." evidence="3">
    <original>W</original>
    <variation>A</variation>
    <location>
        <position position="88"/>
    </location>
</feature>
<feature type="mutagenesis site" description="Abolishes activity." evidence="3">
    <original>Y</original>
    <variation>A</variation>
    <location>
        <position position="115"/>
    </location>
</feature>
<feature type="strand" evidence="5">
    <location>
        <begin position="9"/>
        <end position="15"/>
    </location>
</feature>
<feature type="turn" evidence="5">
    <location>
        <begin position="16"/>
        <end position="18"/>
    </location>
</feature>
<feature type="strand" evidence="5">
    <location>
        <begin position="19"/>
        <end position="26"/>
    </location>
</feature>
<feature type="strand" evidence="5">
    <location>
        <begin position="33"/>
        <end position="42"/>
    </location>
</feature>
<feature type="helix" evidence="5">
    <location>
        <begin position="44"/>
        <end position="49"/>
    </location>
</feature>
<feature type="helix" evidence="5">
    <location>
        <begin position="51"/>
        <end position="53"/>
    </location>
</feature>
<feature type="helix" evidence="5">
    <location>
        <begin position="55"/>
        <end position="58"/>
    </location>
</feature>
<feature type="helix" evidence="5">
    <location>
        <begin position="64"/>
        <end position="66"/>
    </location>
</feature>
<feature type="strand" evidence="5">
    <location>
        <begin position="68"/>
        <end position="71"/>
    </location>
</feature>
<feature type="helix" evidence="5">
    <location>
        <begin position="75"/>
        <end position="77"/>
    </location>
</feature>
<feature type="strand" evidence="6">
    <location>
        <begin position="78"/>
        <end position="80"/>
    </location>
</feature>
<feature type="strand" evidence="5">
    <location>
        <begin position="85"/>
        <end position="91"/>
    </location>
</feature>
<feature type="turn" evidence="5">
    <location>
        <begin position="92"/>
        <end position="95"/>
    </location>
</feature>
<feature type="strand" evidence="5">
    <location>
        <begin position="96"/>
        <end position="103"/>
    </location>
</feature>
<feature type="strand" evidence="5">
    <location>
        <begin position="110"/>
        <end position="113"/>
    </location>
</feature>